<protein>
    <recommendedName>
        <fullName>Ras GTPase-activating-like protein rng2</fullName>
    </recommendedName>
    <alternativeName>
        <fullName>Ring assembly protein 2</fullName>
    </alternativeName>
</protein>
<keyword id="KW-0002">3D-structure</keyword>
<keyword id="KW-0009">Actin-binding</keyword>
<keyword id="KW-0112">Calmodulin-binding</keyword>
<keyword id="KW-0131">Cell cycle</keyword>
<keyword id="KW-0132">Cell division</keyword>
<keyword id="KW-0175">Coiled coil</keyword>
<keyword id="KW-0963">Cytoplasm</keyword>
<keyword id="KW-0206">Cytoskeleton</keyword>
<keyword id="KW-0539">Nucleus</keyword>
<keyword id="KW-1185">Reference proteome</keyword>
<keyword id="KW-0677">Repeat</keyword>
<reference evidence="8" key="1">
    <citation type="journal article" date="2002" name="Nature">
        <title>The genome sequence of Schizosaccharomyces pombe.</title>
        <authorList>
            <person name="Wood V."/>
            <person name="Gwilliam R."/>
            <person name="Rajandream M.A."/>
            <person name="Lyne M.H."/>
            <person name="Lyne R."/>
            <person name="Stewart A."/>
            <person name="Sgouros J.G."/>
            <person name="Peat N."/>
            <person name="Hayles J."/>
            <person name="Baker S.G."/>
            <person name="Basham D."/>
            <person name="Bowman S."/>
            <person name="Brooks K."/>
            <person name="Brown D."/>
            <person name="Brown S."/>
            <person name="Chillingworth T."/>
            <person name="Churcher C.M."/>
            <person name="Collins M."/>
            <person name="Connor R."/>
            <person name="Cronin A."/>
            <person name="Davis P."/>
            <person name="Feltwell T."/>
            <person name="Fraser A."/>
            <person name="Gentles S."/>
            <person name="Goble A."/>
            <person name="Hamlin N."/>
            <person name="Harris D.E."/>
            <person name="Hidalgo J."/>
            <person name="Hodgson G."/>
            <person name="Holroyd S."/>
            <person name="Hornsby T."/>
            <person name="Howarth S."/>
            <person name="Huckle E.J."/>
            <person name="Hunt S."/>
            <person name="Jagels K."/>
            <person name="James K.D."/>
            <person name="Jones L."/>
            <person name="Jones M."/>
            <person name="Leather S."/>
            <person name="McDonald S."/>
            <person name="McLean J."/>
            <person name="Mooney P."/>
            <person name="Moule S."/>
            <person name="Mungall K.L."/>
            <person name="Murphy L.D."/>
            <person name="Niblett D."/>
            <person name="Odell C."/>
            <person name="Oliver K."/>
            <person name="O'Neil S."/>
            <person name="Pearson D."/>
            <person name="Quail M.A."/>
            <person name="Rabbinowitsch E."/>
            <person name="Rutherford K.M."/>
            <person name="Rutter S."/>
            <person name="Saunders D."/>
            <person name="Seeger K."/>
            <person name="Sharp S."/>
            <person name="Skelton J."/>
            <person name="Simmonds M.N."/>
            <person name="Squares R."/>
            <person name="Squares S."/>
            <person name="Stevens K."/>
            <person name="Taylor K."/>
            <person name="Taylor R.G."/>
            <person name="Tivey A."/>
            <person name="Walsh S.V."/>
            <person name="Warren T."/>
            <person name="Whitehead S."/>
            <person name="Woodward J.R."/>
            <person name="Volckaert G."/>
            <person name="Aert R."/>
            <person name="Robben J."/>
            <person name="Grymonprez B."/>
            <person name="Weltjens I."/>
            <person name="Vanstreels E."/>
            <person name="Rieger M."/>
            <person name="Schaefer M."/>
            <person name="Mueller-Auer S."/>
            <person name="Gabel C."/>
            <person name="Fuchs M."/>
            <person name="Duesterhoeft A."/>
            <person name="Fritzc C."/>
            <person name="Holzer E."/>
            <person name="Moestl D."/>
            <person name="Hilbert H."/>
            <person name="Borzym K."/>
            <person name="Langer I."/>
            <person name="Beck A."/>
            <person name="Lehrach H."/>
            <person name="Reinhardt R."/>
            <person name="Pohl T.M."/>
            <person name="Eger P."/>
            <person name="Zimmermann W."/>
            <person name="Wedler H."/>
            <person name="Wambutt R."/>
            <person name="Purnelle B."/>
            <person name="Goffeau A."/>
            <person name="Cadieu E."/>
            <person name="Dreano S."/>
            <person name="Gloux S."/>
            <person name="Lelaure V."/>
            <person name="Mottier S."/>
            <person name="Galibert F."/>
            <person name="Aves S.J."/>
            <person name="Xiang Z."/>
            <person name="Hunt C."/>
            <person name="Moore K."/>
            <person name="Hurst S.M."/>
            <person name="Lucas M."/>
            <person name="Rochet M."/>
            <person name="Gaillardin C."/>
            <person name="Tallada V.A."/>
            <person name="Garzon A."/>
            <person name="Thode G."/>
            <person name="Daga R.R."/>
            <person name="Cruzado L."/>
            <person name="Jimenez J."/>
            <person name="Sanchez M."/>
            <person name="del Rey F."/>
            <person name="Benito J."/>
            <person name="Dominguez A."/>
            <person name="Revuelta J.L."/>
            <person name="Moreno S."/>
            <person name="Armstrong J."/>
            <person name="Forsburg S.L."/>
            <person name="Cerutti L."/>
            <person name="Lowe T."/>
            <person name="McCombie W.R."/>
            <person name="Paulsen I."/>
            <person name="Potashkin J."/>
            <person name="Shpakovski G.V."/>
            <person name="Ussery D."/>
            <person name="Barrell B.G."/>
            <person name="Nurse P."/>
        </authorList>
    </citation>
    <scope>NUCLEOTIDE SEQUENCE [LARGE SCALE GENOMIC DNA]</scope>
    <source>
        <strain>972 / ATCC 24843</strain>
    </source>
</reference>
<reference evidence="8" key="2">
    <citation type="journal article" date="2000" name="Genes Cells">
        <title>Large-scale screening of intracellular protein localization in living fission yeast cells by the use of a GFP-fusion genomic DNA library.</title>
        <authorList>
            <person name="Ding D.-Q."/>
            <person name="Tomita Y."/>
            <person name="Yamamoto A."/>
            <person name="Chikashige Y."/>
            <person name="Haraguchi T."/>
            <person name="Hiraoka Y."/>
        </authorList>
    </citation>
    <scope>NUCLEOTIDE SEQUENCE [LARGE SCALE GENOMIC DNA] OF 354-531</scope>
    <scope>SUBCELLULAR LOCATION</scope>
    <source>
        <strain>ATCC 38364 / 968</strain>
    </source>
</reference>
<reference evidence="8" key="3">
    <citation type="journal article" date="1998" name="Curr. Biol.">
        <title>Rng2p, a protein required for cytokinesis in fission yeast, is a component of the actomyosin ring and the spindle pole body.</title>
        <authorList>
            <person name="Eng K."/>
            <person name="Naqvi N.I."/>
            <person name="Wong K.C.Y."/>
            <person name="Balasubramanian M.K."/>
        </authorList>
    </citation>
    <scope>FUNCTION</scope>
    <scope>INTERACTION WITH CAM1</scope>
    <scope>SUBCELLULAR LOCATION</scope>
</reference>
<evidence type="ECO:0000250" key="1">
    <source>
        <dbReference type="UniProtKB" id="Q12280"/>
    </source>
</evidence>
<evidence type="ECO:0000250" key="2">
    <source>
        <dbReference type="UniProtKB" id="Q5AH02"/>
    </source>
</evidence>
<evidence type="ECO:0000255" key="3"/>
<evidence type="ECO:0000255" key="4">
    <source>
        <dbReference type="PROSITE-ProRule" id="PRU00044"/>
    </source>
</evidence>
<evidence type="ECO:0000255" key="5">
    <source>
        <dbReference type="PROSITE-ProRule" id="PRU00116"/>
    </source>
</evidence>
<evidence type="ECO:0000255" key="6">
    <source>
        <dbReference type="PROSITE-ProRule" id="PRU00167"/>
    </source>
</evidence>
<evidence type="ECO:0000269" key="7">
    <source>
    </source>
</evidence>
<evidence type="ECO:0000305" key="8"/>
<evidence type="ECO:0000312" key="9">
    <source>
        <dbReference type="PomBase" id="SPAC4F8.13c"/>
    </source>
</evidence>
<evidence type="ECO:0007829" key="10">
    <source>
        <dbReference type="PDB" id="1P2X"/>
    </source>
</evidence>
<evidence type="ECO:0007829" key="11">
    <source>
        <dbReference type="PDB" id="1P5S"/>
    </source>
</evidence>
<proteinExistence type="evidence at protein level"/>
<accession>O14188</accession>
<accession>Q9USG0</accession>
<name>IQG1_SCHPO</name>
<comment type="function">
    <text evidence="7">Component of the contractile F-actin ring; required for its construction following assembly of F-actin at the division site.</text>
</comment>
<comment type="subunit">
    <text evidence="7">Interacts with calmodulin cam1.</text>
</comment>
<comment type="interaction">
    <interactant intactId="EBI-1152490">
        <id>O14188</id>
    </interactant>
    <interactant intactId="EBI-617028">
        <id>P10989</id>
        <label>act1</label>
    </interactant>
    <organismsDiffer>false</organismsDiffer>
    <experiments>3</experiments>
</comment>
<comment type="interaction">
    <interactant intactId="EBI-1152490">
        <id>O14188</id>
    </interactant>
    <interactant intactId="EBI-1152513">
        <id>P05933</id>
        <label>cam1</label>
    </interactant>
    <organismsDiffer>false</organismsDiffer>
    <experiments>2</experiments>
</comment>
<comment type="subcellular location">
    <subcellularLocation>
        <location>Cytoplasm</location>
        <location>Cytoskeleton</location>
    </subcellularLocation>
    <subcellularLocation>
        <location>Nucleus envelope</location>
    </subcellularLocation>
    <subcellularLocation>
        <location>Cytoplasm</location>
        <location>Cytoskeleton</location>
        <location>Microtubule organizing center</location>
        <location>Spindle pole body</location>
    </subcellularLocation>
    <text>Localized to the F-actin ring and spindle pole body during interphase and mitosis. Also found in septum.</text>
</comment>
<comment type="domain">
    <text evidence="1">The IQ domains provide the interaction surface for the myosin light chain MLC1.</text>
</comment>
<comment type="domain">
    <text evidence="2">The calponin homology (CH) domain binds to actin filaments.</text>
</comment>
<feature type="chain" id="PRO_0000056665" description="Ras GTPase-activating-like protein rng2">
    <location>
        <begin position="1"/>
        <end position="1489"/>
    </location>
</feature>
<feature type="domain" description="Calponin-homology (CH)" evidence="4">
    <location>
        <begin position="41"/>
        <end position="147"/>
    </location>
</feature>
<feature type="domain" description="IQ 1" evidence="5 8">
    <location>
        <begin position="359"/>
        <end position="388"/>
    </location>
</feature>
<feature type="domain" description="IQ 2" evidence="5 8">
    <location>
        <begin position="389"/>
        <end position="418"/>
    </location>
</feature>
<feature type="domain" description="IQ 3" evidence="5 8">
    <location>
        <begin position="418"/>
        <end position="449"/>
    </location>
</feature>
<feature type="domain" description="IQ 4" evidence="5 8">
    <location>
        <begin position="535"/>
        <end position="564"/>
    </location>
</feature>
<feature type="domain" description="IQ 5" evidence="5 8">
    <location>
        <begin position="565"/>
        <end position="594"/>
    </location>
</feature>
<feature type="domain" description="IQ 6" evidence="5 8">
    <location>
        <begin position="655"/>
        <end position="684"/>
    </location>
</feature>
<feature type="domain" description="Ras-GAP" evidence="6">
    <location>
        <begin position="870"/>
        <end position="1110"/>
    </location>
</feature>
<feature type="coiled-coil region" evidence="3">
    <location>
        <begin position="734"/>
        <end position="770"/>
    </location>
</feature>
<feature type="coiled-coil region" evidence="3">
    <location>
        <begin position="1330"/>
        <end position="1364"/>
    </location>
</feature>
<feature type="helix" evidence="10">
    <location>
        <begin position="33"/>
        <end position="55"/>
    </location>
</feature>
<feature type="helix" evidence="10">
    <location>
        <begin position="62"/>
        <end position="64"/>
    </location>
</feature>
<feature type="helix" evidence="10">
    <location>
        <begin position="65"/>
        <end position="68"/>
    </location>
</feature>
<feature type="turn" evidence="10">
    <location>
        <begin position="69"/>
        <end position="71"/>
    </location>
</feature>
<feature type="helix" evidence="10">
    <location>
        <begin position="73"/>
        <end position="82"/>
    </location>
</feature>
<feature type="strand" evidence="11">
    <location>
        <begin position="94"/>
        <end position="96"/>
    </location>
</feature>
<feature type="helix" evidence="10">
    <location>
        <begin position="100"/>
        <end position="113"/>
    </location>
</feature>
<feature type="helix" evidence="10">
    <location>
        <begin position="118"/>
        <end position="120"/>
    </location>
</feature>
<feature type="helix" evidence="10">
    <location>
        <begin position="124"/>
        <end position="127"/>
    </location>
</feature>
<feature type="helix" evidence="10">
    <location>
        <begin position="133"/>
        <end position="148"/>
    </location>
</feature>
<feature type="turn" evidence="10">
    <location>
        <begin position="149"/>
        <end position="151"/>
    </location>
</feature>
<feature type="helix" evidence="10">
    <location>
        <begin position="167"/>
        <end position="179"/>
    </location>
</feature>
<feature type="helix" evidence="10">
    <location>
        <begin position="187"/>
        <end position="189"/>
    </location>
</feature>
<sequence length="1489" mass="171677">MDVNVGLSRLQSQAGAPVGTKGSNTRLAAKQRETLQAYDYLCRVDEAKKWIEECLGTDLGPTSTFEQSLRNGVVLALLVQKFQPDKLIKIFYSNELQFRHSDNINKFLDFIHGIGLPEIFHFELTDIYEGKNLPKVIYCIHALSYFLSMQDLAPPLIKSDENLSFTDEDVSIIVRRLRQSNVILPNFKALSADFMLRASPVSSRTPSPTRFPKHARFQTLNSSDSASIYSSPYTSPTLEFSKKDASARSDILKMHRRTKSATPSLEQFNEPYKQTLPSHSIEFEDSFFQPPSQKGHMQRSFLTTFSAPTRRREALFSTTSGLSQRSPVDEKIVNAIQACGRGVLVRLRLVDMLQSLVEQSSSVVLLQAVIRGYISRNTYRIRKKAYDELVNWVTSIQSISRAYLIRAQYRKVVLQEEATKSIQTLQSIIRGGFYRRKYHSLIERLDLFTPSFVLIQSSALGFLTRHAIVNMLDNLYNYIPLFNRMQSILRANMFRNEWSNFLDSVQSFPVSFHSICKGRLIRDSINRLNGSLLGELDNFIKLQNLSRGFMIRRAFKEKLEKLKASTSSFIALQAIVRAFLLRKNLESIYDSFQKSHLSVIKAQSLYRGFITRTKIDYCNDYLLKRLPDIVFMQSAVRAILLRDDVNYTEVQLDSFIPEIVLLQSLIRGYLSRNKFSRKLQNFHKNMENPIVAKSIFRGRQEGLAYRELATAKNPPVMTVKNFVHLLDDTNFDFEEEVLLEKMRKEIVQQVRDNEEIEVHINELDVKIALLVKNKISLDDVLKHHNKYKFGKQSTEYLKINTLSMKSLNNSSRKFLELYQCFFYVLQTNEMYLANYFQALKTEGTSSVKIRHAVYLVLQIFGHGSNRREEVLLLRFISQVIKLEAALVNSSQDLLSDDCVWKLLFTGYRGDVREVKLWKTILGRIHKVLVADNHLDFEINPLTLFKSFNPEVASQTDSPKLTLSLAMQHPPTRNLYVSRLRELRKLCQSFLVALSKNIENIPYALCYTAAQLKNSLQRYFPAAHKEEIFGVIGKFVYWAYVAPVLVSPDNFKLVDGSITALQRKNLYTLSSILSEIFSIESCDSKQLGFFRPLSEFIEVSKQDTMLMLERLVDVVDPEVYFEFDAFEDLVNTKRPVIYMKRDDILGIYSSIAYVIDSIAPPDVNDPLRAVVNSLGPVSEQDNDFVQDETDVKLELNPKFCTIENPVAQERTLIVQTKRYILFIIRIQNGLNLLEILVKPVTDSDEAAWQNLLAEESEKNARNYDLFDDSIFSMSFAELKYTALSNIVEMEKLGFANRRNNYQDMVNSIALDIRNKSRRRMQRQRELDAGHQSLLNLREKRAFLDSQLKSYNEYIEQAMETLQSKKGKKKLIPFSKQYFHMRDLRKSGRVPRFGSFKYPALKLYDRGVLVSISHMPQKEKLYITISADEVGKFILEATSPTVKVSSPRCELHLDDLLSAQYNKVLTLDVLDGRLKLNTNMFLHLIFSKFYS</sequence>
<gene>
    <name evidence="9" type="primary">rng2</name>
    <name evidence="9" type="ORF">SPAC4F8.13c</name>
</gene>
<dbReference type="EMBL" id="CU329670">
    <property type="protein sequence ID" value="CAB11059.1"/>
    <property type="molecule type" value="Genomic_DNA"/>
</dbReference>
<dbReference type="EMBL" id="AB027779">
    <property type="protein sequence ID" value="BAA87083.1"/>
    <property type="molecule type" value="Genomic_DNA"/>
</dbReference>
<dbReference type="PIR" id="T38842">
    <property type="entry name" value="T38842"/>
</dbReference>
<dbReference type="RefSeq" id="NP_593860.1">
    <property type="nucleotide sequence ID" value="NM_001019289.2"/>
</dbReference>
<dbReference type="PDB" id="1P2X">
    <property type="method" value="X-ray"/>
    <property type="resolution" value="2.21 A"/>
    <property type="chains" value="A=32-190"/>
</dbReference>
<dbReference type="PDB" id="1P5S">
    <property type="method" value="X-ray"/>
    <property type="resolution" value="2.22 A"/>
    <property type="chains" value="A=1-190"/>
</dbReference>
<dbReference type="PDBsum" id="1P2X"/>
<dbReference type="PDBsum" id="1P5S"/>
<dbReference type="SMR" id="O14188"/>
<dbReference type="BioGRID" id="279561">
    <property type="interactions" value="49"/>
</dbReference>
<dbReference type="FunCoup" id="O14188">
    <property type="interactions" value="170"/>
</dbReference>
<dbReference type="IntAct" id="O14188">
    <property type="interactions" value="2"/>
</dbReference>
<dbReference type="MINT" id="O14188"/>
<dbReference type="STRING" id="284812.O14188"/>
<dbReference type="iPTMnet" id="O14188"/>
<dbReference type="PaxDb" id="4896-SPAC4F8.13c.1"/>
<dbReference type="EnsemblFungi" id="SPAC4F8.13c.1">
    <property type="protein sequence ID" value="SPAC4F8.13c.1:pep"/>
    <property type="gene ID" value="SPAC4F8.13c"/>
</dbReference>
<dbReference type="GeneID" id="2543129"/>
<dbReference type="KEGG" id="spo:2543129"/>
<dbReference type="PomBase" id="SPAC4F8.13c">
    <property type="gene designation" value="rng2"/>
</dbReference>
<dbReference type="VEuPathDB" id="FungiDB:SPAC4F8.13c"/>
<dbReference type="eggNOG" id="KOG2128">
    <property type="taxonomic scope" value="Eukaryota"/>
</dbReference>
<dbReference type="HOGENOM" id="CLU_000972_1_0_1"/>
<dbReference type="InParanoid" id="O14188"/>
<dbReference type="OMA" id="KGVLVHW"/>
<dbReference type="PhylomeDB" id="O14188"/>
<dbReference type="Reactome" id="R-SPO-5626467">
    <property type="pathway name" value="RHO GTPases activate IQGAPs"/>
</dbReference>
<dbReference type="Reactome" id="R-SPO-6798695">
    <property type="pathway name" value="Neutrophil degranulation"/>
</dbReference>
<dbReference type="Reactome" id="R-SPO-8980692">
    <property type="pathway name" value="RHOA GTPase cycle"/>
</dbReference>
<dbReference type="Reactome" id="R-SPO-9013026">
    <property type="pathway name" value="RHOB GTPase cycle"/>
</dbReference>
<dbReference type="Reactome" id="R-SPO-9013106">
    <property type="pathway name" value="RHOC GTPase cycle"/>
</dbReference>
<dbReference type="Reactome" id="R-SPO-9013406">
    <property type="pathway name" value="RHOQ GTPase cycle"/>
</dbReference>
<dbReference type="Reactome" id="R-SPO-9013420">
    <property type="pathway name" value="RHOU GTPase cycle"/>
</dbReference>
<dbReference type="Reactome" id="R-SPO-9013424">
    <property type="pathway name" value="RHOV GTPase cycle"/>
</dbReference>
<dbReference type="CD-CODE" id="576F0A76">
    <property type="entry name" value="Centrosome"/>
</dbReference>
<dbReference type="EvolutionaryTrace" id="O14188"/>
<dbReference type="PRO" id="PR:O14188"/>
<dbReference type="Proteomes" id="UP000002485">
    <property type="component" value="Chromosome I"/>
</dbReference>
<dbReference type="GO" id="GO:0005938">
    <property type="term" value="C:cell cortex"/>
    <property type="evidence" value="ECO:0000318"/>
    <property type="project" value="GO_Central"/>
</dbReference>
<dbReference type="GO" id="GO:0005737">
    <property type="term" value="C:cytoplasm"/>
    <property type="evidence" value="ECO:0000314"/>
    <property type="project" value="PomBase"/>
</dbReference>
<dbReference type="GO" id="GO:0071341">
    <property type="term" value="C:medial cortical node"/>
    <property type="evidence" value="ECO:0000314"/>
    <property type="project" value="PomBase"/>
</dbReference>
<dbReference type="GO" id="GO:0110085">
    <property type="term" value="C:mitotic actomyosin contractile ring"/>
    <property type="evidence" value="ECO:0000314"/>
    <property type="project" value="PomBase"/>
</dbReference>
<dbReference type="GO" id="GO:0120104">
    <property type="term" value="C:mitotic actomyosin contractile ring, proximal layer"/>
    <property type="evidence" value="ECO:0000314"/>
    <property type="project" value="PomBase"/>
</dbReference>
<dbReference type="GO" id="GO:0044732">
    <property type="term" value="C:mitotic spindle pole body"/>
    <property type="evidence" value="ECO:0000314"/>
    <property type="project" value="PomBase"/>
</dbReference>
<dbReference type="GO" id="GO:0005635">
    <property type="term" value="C:nuclear envelope"/>
    <property type="evidence" value="ECO:0007669"/>
    <property type="project" value="UniProtKB-SubCell"/>
</dbReference>
<dbReference type="GO" id="GO:0005816">
    <property type="term" value="C:spindle pole body"/>
    <property type="evidence" value="ECO:0000314"/>
    <property type="project" value="UniProtKB"/>
</dbReference>
<dbReference type="GO" id="GO:0051015">
    <property type="term" value="F:actin filament binding"/>
    <property type="evidence" value="ECO:0000314"/>
    <property type="project" value="PomBase"/>
</dbReference>
<dbReference type="GO" id="GO:0005516">
    <property type="term" value="F:calmodulin binding"/>
    <property type="evidence" value="ECO:0000314"/>
    <property type="project" value="PomBase"/>
</dbReference>
<dbReference type="GO" id="GO:0008093">
    <property type="term" value="F:cytoskeletal anchor activity"/>
    <property type="evidence" value="ECO:0000269"/>
    <property type="project" value="PomBase"/>
</dbReference>
<dbReference type="GO" id="GO:0005096">
    <property type="term" value="F:GTPase activator activity"/>
    <property type="evidence" value="ECO:0000318"/>
    <property type="project" value="GO_Central"/>
</dbReference>
<dbReference type="GO" id="GO:0071520">
    <property type="term" value="P:actomyosin contractile ring assembly actin filament bundle convergence"/>
    <property type="evidence" value="ECO:0000315"/>
    <property type="project" value="PomBase"/>
</dbReference>
<dbReference type="GO" id="GO:1903475">
    <property type="term" value="P:mitotic actomyosin contractile ring assembly"/>
    <property type="evidence" value="ECO:0000315"/>
    <property type="project" value="PomBase"/>
</dbReference>
<dbReference type="GO" id="GO:1903479">
    <property type="term" value="P:mitotic actomyosin contractile ring assembly actin filament organization"/>
    <property type="evidence" value="ECO:0000318"/>
    <property type="project" value="GO_Central"/>
</dbReference>
<dbReference type="GO" id="GO:1902404">
    <property type="term" value="P:mitotic actomyosin contractile ring contraction"/>
    <property type="evidence" value="ECO:0000269"/>
    <property type="project" value="PomBase"/>
</dbReference>
<dbReference type="CDD" id="cd21206">
    <property type="entry name" value="CH_IQGAP"/>
    <property type="match status" value="1"/>
</dbReference>
<dbReference type="CDD" id="cd12206">
    <property type="entry name" value="RasGAP_IQGAP_related"/>
    <property type="match status" value="1"/>
</dbReference>
<dbReference type="FunFam" id="1.10.506.10:FF:000004">
    <property type="entry name" value="IQ motif containing GTPase activating protein 1"/>
    <property type="match status" value="1"/>
</dbReference>
<dbReference type="Gene3D" id="1.20.5.190">
    <property type="match status" value="2"/>
</dbReference>
<dbReference type="Gene3D" id="1.10.418.10">
    <property type="entry name" value="Calponin-like domain"/>
    <property type="match status" value="1"/>
</dbReference>
<dbReference type="Gene3D" id="1.10.506.10">
    <property type="entry name" value="GTPase Activation - p120gap, domain 1"/>
    <property type="match status" value="1"/>
</dbReference>
<dbReference type="InterPro" id="IPR001715">
    <property type="entry name" value="CH_dom"/>
</dbReference>
<dbReference type="InterPro" id="IPR036872">
    <property type="entry name" value="CH_dom_sf"/>
</dbReference>
<dbReference type="InterPro" id="IPR000048">
    <property type="entry name" value="IQ_motif_EF-hand-BS"/>
</dbReference>
<dbReference type="InterPro" id="IPR000593">
    <property type="entry name" value="RasGAP_C"/>
</dbReference>
<dbReference type="InterPro" id="IPR001936">
    <property type="entry name" value="RasGAP_dom"/>
</dbReference>
<dbReference type="InterPro" id="IPR008936">
    <property type="entry name" value="Rho_GTPase_activation_prot"/>
</dbReference>
<dbReference type="PANTHER" id="PTHR14149:SF14">
    <property type="entry name" value="CALPONIN-HOMOLOGY (CH) DOMAIN-CONTAINING PROTEIN"/>
    <property type="match status" value="1"/>
</dbReference>
<dbReference type="PANTHER" id="PTHR14149">
    <property type="entry name" value="RAS GTPASE-ACTIVATING PROTEIN WITH IQ MOTIF"/>
    <property type="match status" value="1"/>
</dbReference>
<dbReference type="Pfam" id="PF00307">
    <property type="entry name" value="CH"/>
    <property type="match status" value="1"/>
</dbReference>
<dbReference type="Pfam" id="PF00612">
    <property type="entry name" value="IQ"/>
    <property type="match status" value="2"/>
</dbReference>
<dbReference type="Pfam" id="PF00616">
    <property type="entry name" value="RasGAP"/>
    <property type="match status" value="1"/>
</dbReference>
<dbReference type="Pfam" id="PF03836">
    <property type="entry name" value="RasGAP_C"/>
    <property type="match status" value="1"/>
</dbReference>
<dbReference type="SMART" id="SM00033">
    <property type="entry name" value="CH"/>
    <property type="match status" value="1"/>
</dbReference>
<dbReference type="SMART" id="SM00015">
    <property type="entry name" value="IQ"/>
    <property type="match status" value="8"/>
</dbReference>
<dbReference type="SMART" id="SM00323">
    <property type="entry name" value="RasGAP"/>
    <property type="match status" value="1"/>
</dbReference>
<dbReference type="SUPFAM" id="SSF47576">
    <property type="entry name" value="Calponin-homology domain, CH-domain"/>
    <property type="match status" value="1"/>
</dbReference>
<dbReference type="SUPFAM" id="SSF48350">
    <property type="entry name" value="GTPase activation domain, GAP"/>
    <property type="match status" value="1"/>
</dbReference>
<dbReference type="SUPFAM" id="SSF143885">
    <property type="entry name" value="RGC domain-like"/>
    <property type="match status" value="1"/>
</dbReference>
<dbReference type="PROSITE" id="PS50021">
    <property type="entry name" value="CH"/>
    <property type="match status" value="1"/>
</dbReference>
<dbReference type="PROSITE" id="PS50096">
    <property type="entry name" value="IQ"/>
    <property type="match status" value="6"/>
</dbReference>
<dbReference type="PROSITE" id="PS50018">
    <property type="entry name" value="RAS_GTPASE_ACTIV_2"/>
    <property type="match status" value="1"/>
</dbReference>
<organism>
    <name type="scientific">Schizosaccharomyces pombe (strain 972 / ATCC 24843)</name>
    <name type="common">Fission yeast</name>
    <dbReference type="NCBI Taxonomy" id="284812"/>
    <lineage>
        <taxon>Eukaryota</taxon>
        <taxon>Fungi</taxon>
        <taxon>Dikarya</taxon>
        <taxon>Ascomycota</taxon>
        <taxon>Taphrinomycotina</taxon>
        <taxon>Schizosaccharomycetes</taxon>
        <taxon>Schizosaccharomycetales</taxon>
        <taxon>Schizosaccharomycetaceae</taxon>
        <taxon>Schizosaccharomyces</taxon>
    </lineage>
</organism>